<evidence type="ECO:0000256" key="1">
    <source>
        <dbReference type="SAM" id="MobiDB-lite"/>
    </source>
</evidence>
<evidence type="ECO:0000305" key="2"/>
<sequence length="179" mass="19944">MTETYIKNTSKDLTSAIRGQLTYDDKVIEKIVGLALENVDGLLGVNGGFFANLKDKLVNTESVRDGVNVEVGKKQVAVDLDIVAEYQKHVPTIYDSIKSIVEEEVKRMTDLDVIEVNVKVVDIKTKEQFEAEKVSLQDKVSDMARSTSEFTSHQVENVKASVDNGVEKLQDQKAEPRVK</sequence>
<dbReference type="EMBL" id="AE014074">
    <property type="protein sequence ID" value="AAM79504.1"/>
    <property type="molecule type" value="Genomic_DNA"/>
</dbReference>
<dbReference type="RefSeq" id="WP_002984475.1">
    <property type="nucleotide sequence ID" value="NC_004070.1"/>
</dbReference>
<dbReference type="KEGG" id="spg:SpyM3_0897"/>
<dbReference type="HOGENOM" id="CLU_113198_1_1_9"/>
<dbReference type="Proteomes" id="UP000000564">
    <property type="component" value="Chromosome"/>
</dbReference>
<dbReference type="InterPro" id="IPR005531">
    <property type="entry name" value="Asp23"/>
</dbReference>
<dbReference type="PANTHER" id="PTHR34297:SF3">
    <property type="entry name" value="ALKALINE SHOCK PROTEIN 23"/>
    <property type="match status" value="1"/>
</dbReference>
<dbReference type="PANTHER" id="PTHR34297">
    <property type="entry name" value="HYPOTHETICAL CYTOSOLIC PROTEIN-RELATED"/>
    <property type="match status" value="1"/>
</dbReference>
<dbReference type="Pfam" id="PF03780">
    <property type="entry name" value="Asp23"/>
    <property type="match status" value="1"/>
</dbReference>
<organism>
    <name type="scientific">Streptococcus pyogenes serotype M3 (strain ATCC BAA-595 / MGAS315)</name>
    <dbReference type="NCBI Taxonomy" id="198466"/>
    <lineage>
        <taxon>Bacteria</taxon>
        <taxon>Bacillati</taxon>
        <taxon>Bacillota</taxon>
        <taxon>Bacilli</taxon>
        <taxon>Lactobacillales</taxon>
        <taxon>Streptococcaceae</taxon>
        <taxon>Streptococcus</taxon>
    </lineage>
</organism>
<name>GLS24_STRP3</name>
<comment type="similarity">
    <text evidence="2">Belongs to the asp23 family.</text>
</comment>
<protein>
    <recommendedName>
        <fullName>Stress response regulator gls24 homolog</fullName>
    </recommendedName>
</protein>
<accession>P0CZ86</accession>
<accession>Q79X29</accession>
<accession>Q7CF25</accession>
<proteinExistence type="inferred from homology"/>
<gene>
    <name type="ordered locus">SpyM3_0897</name>
</gene>
<feature type="chain" id="PRO_0000228682" description="Stress response regulator gls24 homolog">
    <location>
        <begin position="1"/>
        <end position="179"/>
    </location>
</feature>
<feature type="region of interest" description="Disordered" evidence="1">
    <location>
        <begin position="147"/>
        <end position="179"/>
    </location>
</feature>
<feature type="compositionally biased region" description="Basic and acidic residues" evidence="1">
    <location>
        <begin position="165"/>
        <end position="179"/>
    </location>
</feature>
<reference key="1">
    <citation type="journal article" date="2002" name="Proc. Natl. Acad. Sci. U.S.A.">
        <title>Genome sequence of a serotype M3 strain of group A Streptococcus: phage-encoded toxins, the high-virulence phenotype, and clone emergence.</title>
        <authorList>
            <person name="Beres S.B."/>
            <person name="Sylva G.L."/>
            <person name="Barbian K.D."/>
            <person name="Lei B."/>
            <person name="Hoff J.S."/>
            <person name="Mammarella N.D."/>
            <person name="Liu M.-Y."/>
            <person name="Smoot J.C."/>
            <person name="Porcella S.F."/>
            <person name="Parkins L.D."/>
            <person name="Campbell D.S."/>
            <person name="Smith T.M."/>
            <person name="McCormick J.K."/>
            <person name="Leung D.Y.M."/>
            <person name="Schlievert P.M."/>
            <person name="Musser J.M."/>
        </authorList>
    </citation>
    <scope>NUCLEOTIDE SEQUENCE [LARGE SCALE GENOMIC DNA]</scope>
    <source>
        <strain>ATCC BAA-595 / MGAS315</strain>
    </source>
</reference>